<keyword id="KW-1185">Reference proteome</keyword>
<keyword id="KW-0687">Ribonucleoprotein</keyword>
<keyword id="KW-0689">Ribosomal protein</keyword>
<keyword id="KW-0694">RNA-binding</keyword>
<keyword id="KW-0699">rRNA-binding</keyword>
<reference key="1">
    <citation type="journal article" date="2008" name="J. Biotechnol.">
        <title>Ultrafast pyrosequencing of Corynebacterium kroppenstedtii DSM44385 revealed insights into the physiology of a lipophilic corynebacterium that lacks mycolic acids.</title>
        <authorList>
            <person name="Tauch A."/>
            <person name="Schneider J."/>
            <person name="Szczepanowski R."/>
            <person name="Tilker A."/>
            <person name="Viehoever P."/>
            <person name="Gartemann K.-H."/>
            <person name="Arnold W."/>
            <person name="Blom J."/>
            <person name="Brinkrolf K."/>
            <person name="Brune I."/>
            <person name="Goetker S."/>
            <person name="Weisshaar B."/>
            <person name="Goesmann A."/>
            <person name="Droege M."/>
            <person name="Puehler A."/>
        </authorList>
    </citation>
    <scope>NUCLEOTIDE SEQUENCE [LARGE SCALE GENOMIC DNA]</scope>
    <source>
        <strain>DSM 44385 / JCM 11950 / CIP 105744 / CCUG 35717</strain>
    </source>
</reference>
<accession>C4LL49</accession>
<sequence>MAIRKYKPTTPGRRQSSVSGFDELTRSTPEKSLLRPLHKTGGRNVHGHITTRHKGGGHKRQYRLIDFRRNDKDGVPAKVAHIEYDPNRTANIALLHYFDGEKRYIIAPRNLKQGTVVESGANADIKVGNNLPLRNIPTGTTIHAVELKPGGGAKLARSAGSSIQLLGKEGKYAILRMPSTEIRRVDARCRATVGEVGNADQINIRWGKAGRMRWKGVRPTVRGVVMNPVDHPHGGGEGKSSGGRHPVSPWGQPEGRTRKPNRPSDGLIVRRRRSNKNKKR</sequence>
<organism>
    <name type="scientific">Corynebacterium kroppenstedtii (strain DSM 44385 / JCM 11950 / CIP 105744 / CCUG 35717)</name>
    <dbReference type="NCBI Taxonomy" id="645127"/>
    <lineage>
        <taxon>Bacteria</taxon>
        <taxon>Bacillati</taxon>
        <taxon>Actinomycetota</taxon>
        <taxon>Actinomycetes</taxon>
        <taxon>Mycobacteriales</taxon>
        <taxon>Corynebacteriaceae</taxon>
        <taxon>Corynebacterium</taxon>
    </lineage>
</organism>
<protein>
    <recommendedName>
        <fullName evidence="1">Large ribosomal subunit protein uL2</fullName>
    </recommendedName>
    <alternativeName>
        <fullName evidence="3">50S ribosomal protein L2</fullName>
    </alternativeName>
</protein>
<evidence type="ECO:0000255" key="1">
    <source>
        <dbReference type="HAMAP-Rule" id="MF_01320"/>
    </source>
</evidence>
<evidence type="ECO:0000256" key="2">
    <source>
        <dbReference type="SAM" id="MobiDB-lite"/>
    </source>
</evidence>
<evidence type="ECO:0000305" key="3"/>
<name>RL2_CORK4</name>
<gene>
    <name evidence="1" type="primary">rplB</name>
    <name type="ordered locus">ckrop_1834</name>
</gene>
<proteinExistence type="inferred from homology"/>
<dbReference type="EMBL" id="CP001620">
    <property type="protein sequence ID" value="ACR18554.1"/>
    <property type="molecule type" value="Genomic_DNA"/>
</dbReference>
<dbReference type="RefSeq" id="WP_012732441.1">
    <property type="nucleotide sequence ID" value="NC_012704.1"/>
</dbReference>
<dbReference type="SMR" id="C4LL49"/>
<dbReference type="STRING" id="645127.ckrop_1834"/>
<dbReference type="GeneID" id="92726631"/>
<dbReference type="KEGG" id="ckp:ckrop_1834"/>
<dbReference type="eggNOG" id="COG0090">
    <property type="taxonomic scope" value="Bacteria"/>
</dbReference>
<dbReference type="HOGENOM" id="CLU_036235_2_1_11"/>
<dbReference type="OrthoDB" id="9778722at2"/>
<dbReference type="Proteomes" id="UP000001473">
    <property type="component" value="Chromosome"/>
</dbReference>
<dbReference type="GO" id="GO:0015934">
    <property type="term" value="C:large ribosomal subunit"/>
    <property type="evidence" value="ECO:0007669"/>
    <property type="project" value="InterPro"/>
</dbReference>
<dbReference type="GO" id="GO:0019843">
    <property type="term" value="F:rRNA binding"/>
    <property type="evidence" value="ECO:0007669"/>
    <property type="project" value="UniProtKB-UniRule"/>
</dbReference>
<dbReference type="GO" id="GO:0003735">
    <property type="term" value="F:structural constituent of ribosome"/>
    <property type="evidence" value="ECO:0007669"/>
    <property type="project" value="InterPro"/>
</dbReference>
<dbReference type="GO" id="GO:0016740">
    <property type="term" value="F:transferase activity"/>
    <property type="evidence" value="ECO:0007669"/>
    <property type="project" value="InterPro"/>
</dbReference>
<dbReference type="GO" id="GO:0002181">
    <property type="term" value="P:cytoplasmic translation"/>
    <property type="evidence" value="ECO:0007669"/>
    <property type="project" value="TreeGrafter"/>
</dbReference>
<dbReference type="FunFam" id="2.30.30.30:FF:000001">
    <property type="entry name" value="50S ribosomal protein L2"/>
    <property type="match status" value="1"/>
</dbReference>
<dbReference type="FunFam" id="2.40.50.140:FF:000003">
    <property type="entry name" value="50S ribosomal protein L2"/>
    <property type="match status" value="1"/>
</dbReference>
<dbReference type="FunFam" id="4.10.950.10:FF:000001">
    <property type="entry name" value="50S ribosomal protein L2"/>
    <property type="match status" value="1"/>
</dbReference>
<dbReference type="Gene3D" id="2.30.30.30">
    <property type="match status" value="1"/>
</dbReference>
<dbReference type="Gene3D" id="2.40.50.140">
    <property type="entry name" value="Nucleic acid-binding proteins"/>
    <property type="match status" value="1"/>
</dbReference>
<dbReference type="Gene3D" id="4.10.950.10">
    <property type="entry name" value="Ribosomal protein L2, domain 3"/>
    <property type="match status" value="1"/>
</dbReference>
<dbReference type="HAMAP" id="MF_01320_B">
    <property type="entry name" value="Ribosomal_uL2_B"/>
    <property type="match status" value="1"/>
</dbReference>
<dbReference type="InterPro" id="IPR012340">
    <property type="entry name" value="NA-bd_OB-fold"/>
</dbReference>
<dbReference type="InterPro" id="IPR014722">
    <property type="entry name" value="Rib_uL2_dom2"/>
</dbReference>
<dbReference type="InterPro" id="IPR002171">
    <property type="entry name" value="Ribosomal_uL2"/>
</dbReference>
<dbReference type="InterPro" id="IPR005880">
    <property type="entry name" value="Ribosomal_uL2_bac/org-type"/>
</dbReference>
<dbReference type="InterPro" id="IPR022669">
    <property type="entry name" value="Ribosomal_uL2_C"/>
</dbReference>
<dbReference type="InterPro" id="IPR022671">
    <property type="entry name" value="Ribosomal_uL2_CS"/>
</dbReference>
<dbReference type="InterPro" id="IPR014726">
    <property type="entry name" value="Ribosomal_uL2_dom3"/>
</dbReference>
<dbReference type="InterPro" id="IPR022666">
    <property type="entry name" value="Ribosomal_uL2_RNA-bd_dom"/>
</dbReference>
<dbReference type="InterPro" id="IPR008991">
    <property type="entry name" value="Translation_prot_SH3-like_sf"/>
</dbReference>
<dbReference type="NCBIfam" id="TIGR01171">
    <property type="entry name" value="rplB_bact"/>
    <property type="match status" value="1"/>
</dbReference>
<dbReference type="PANTHER" id="PTHR13691:SF5">
    <property type="entry name" value="LARGE RIBOSOMAL SUBUNIT PROTEIN UL2M"/>
    <property type="match status" value="1"/>
</dbReference>
<dbReference type="PANTHER" id="PTHR13691">
    <property type="entry name" value="RIBOSOMAL PROTEIN L2"/>
    <property type="match status" value="1"/>
</dbReference>
<dbReference type="Pfam" id="PF00181">
    <property type="entry name" value="Ribosomal_L2"/>
    <property type="match status" value="1"/>
</dbReference>
<dbReference type="Pfam" id="PF03947">
    <property type="entry name" value="Ribosomal_L2_C"/>
    <property type="match status" value="1"/>
</dbReference>
<dbReference type="PIRSF" id="PIRSF002158">
    <property type="entry name" value="Ribosomal_L2"/>
    <property type="match status" value="1"/>
</dbReference>
<dbReference type="SMART" id="SM01383">
    <property type="entry name" value="Ribosomal_L2"/>
    <property type="match status" value="1"/>
</dbReference>
<dbReference type="SMART" id="SM01382">
    <property type="entry name" value="Ribosomal_L2_C"/>
    <property type="match status" value="1"/>
</dbReference>
<dbReference type="SUPFAM" id="SSF50249">
    <property type="entry name" value="Nucleic acid-binding proteins"/>
    <property type="match status" value="1"/>
</dbReference>
<dbReference type="SUPFAM" id="SSF50104">
    <property type="entry name" value="Translation proteins SH3-like domain"/>
    <property type="match status" value="1"/>
</dbReference>
<dbReference type="PROSITE" id="PS00467">
    <property type="entry name" value="RIBOSOMAL_L2"/>
    <property type="match status" value="1"/>
</dbReference>
<feature type="chain" id="PRO_1000214440" description="Large ribosomal subunit protein uL2">
    <location>
        <begin position="1"/>
        <end position="280"/>
    </location>
</feature>
<feature type="region of interest" description="Disordered" evidence="2">
    <location>
        <begin position="1"/>
        <end position="59"/>
    </location>
</feature>
<feature type="region of interest" description="Disordered" evidence="2">
    <location>
        <begin position="223"/>
        <end position="280"/>
    </location>
</feature>
<feature type="compositionally biased region" description="Basic and acidic residues" evidence="2">
    <location>
        <begin position="23"/>
        <end position="33"/>
    </location>
</feature>
<feature type="compositionally biased region" description="Basic residues" evidence="2">
    <location>
        <begin position="36"/>
        <end position="59"/>
    </location>
</feature>
<feature type="compositionally biased region" description="Basic residues" evidence="2">
    <location>
        <begin position="269"/>
        <end position="280"/>
    </location>
</feature>
<comment type="function">
    <text evidence="1">One of the primary rRNA binding proteins. Required for association of the 30S and 50S subunits to form the 70S ribosome, for tRNA binding and peptide bond formation. It has been suggested to have peptidyltransferase activity; this is somewhat controversial. Makes several contacts with the 16S rRNA in the 70S ribosome.</text>
</comment>
<comment type="subunit">
    <text evidence="1">Part of the 50S ribosomal subunit. Forms a bridge to the 30S subunit in the 70S ribosome.</text>
</comment>
<comment type="similarity">
    <text evidence="1">Belongs to the universal ribosomal protein uL2 family.</text>
</comment>